<reference key="1">
    <citation type="journal article" date="2008" name="BMC Genomics">
        <title>The missing link: Bordetella petrii is endowed with both the metabolic versatility of environmental bacteria and virulence traits of pathogenic Bordetellae.</title>
        <authorList>
            <person name="Gross R."/>
            <person name="Guzman C.A."/>
            <person name="Sebaihia M."/>
            <person name="Martin dos Santos V.A.P."/>
            <person name="Pieper D.H."/>
            <person name="Koebnik R."/>
            <person name="Lechner M."/>
            <person name="Bartels D."/>
            <person name="Buhrmester J."/>
            <person name="Choudhuri J.V."/>
            <person name="Ebensen T."/>
            <person name="Gaigalat L."/>
            <person name="Herrmann S."/>
            <person name="Khachane A.N."/>
            <person name="Larisch C."/>
            <person name="Link S."/>
            <person name="Linke B."/>
            <person name="Meyer F."/>
            <person name="Mormann S."/>
            <person name="Nakunst D."/>
            <person name="Rueckert C."/>
            <person name="Schneiker-Bekel S."/>
            <person name="Schulze K."/>
            <person name="Voerholter F.-J."/>
            <person name="Yevsa T."/>
            <person name="Engle J.T."/>
            <person name="Goldman W.E."/>
            <person name="Puehler A."/>
            <person name="Goebel U.B."/>
            <person name="Goesmann A."/>
            <person name="Bloecker H."/>
            <person name="Kaiser O."/>
            <person name="Martinez-Arias R."/>
        </authorList>
    </citation>
    <scope>NUCLEOTIDE SEQUENCE [LARGE SCALE GENOMIC DNA]</scope>
    <source>
        <strain>ATCC BAA-461 / DSM 12804 / CCUG 43448</strain>
    </source>
</reference>
<gene>
    <name type="ordered locus">Bpet3884</name>
</gene>
<dbReference type="EMBL" id="AM902716">
    <property type="protein sequence ID" value="CAP44230.1"/>
    <property type="molecule type" value="Genomic_DNA"/>
</dbReference>
<dbReference type="STRING" id="94624.Bpet3884"/>
<dbReference type="KEGG" id="bpt:Bpet3884"/>
<dbReference type="eggNOG" id="COG1671">
    <property type="taxonomic scope" value="Bacteria"/>
</dbReference>
<dbReference type="Proteomes" id="UP000001225">
    <property type="component" value="Chromosome"/>
</dbReference>
<dbReference type="CDD" id="cd18720">
    <property type="entry name" value="PIN_YqxD-like"/>
    <property type="match status" value="1"/>
</dbReference>
<dbReference type="HAMAP" id="MF_00489">
    <property type="entry name" value="UPF0178"/>
    <property type="match status" value="1"/>
</dbReference>
<dbReference type="InterPro" id="IPR003791">
    <property type="entry name" value="UPF0178"/>
</dbReference>
<dbReference type="NCBIfam" id="NF001095">
    <property type="entry name" value="PRK00124.1"/>
    <property type="match status" value="1"/>
</dbReference>
<dbReference type="PANTHER" id="PTHR35146">
    <property type="entry name" value="UPF0178 PROTEIN YAII"/>
    <property type="match status" value="1"/>
</dbReference>
<dbReference type="PANTHER" id="PTHR35146:SF1">
    <property type="entry name" value="UPF0178 PROTEIN YAII"/>
    <property type="match status" value="1"/>
</dbReference>
<dbReference type="Pfam" id="PF02639">
    <property type="entry name" value="DUF188"/>
    <property type="match status" value="1"/>
</dbReference>
<accession>A9I3Y9</accession>
<proteinExistence type="inferred from homology"/>
<sequence>MHIWVDADACPAVIKDILFRAAQRWQRPLTLVANQMLRTPPSPLIRAIQVPRGFDVADGYIVEHAGSGDLVITGDIPLAAQVLEKQALVLSPRGERYTADTIRERLSMRDMMEELRSAGIDTGGPAAFSQADRRAFANALDRLMLASARA</sequence>
<comment type="similarity">
    <text evidence="1">Belongs to the UPF0178 family.</text>
</comment>
<organism>
    <name type="scientific">Bordetella petrii (strain ATCC BAA-461 / DSM 12804 / CCUG 43448)</name>
    <dbReference type="NCBI Taxonomy" id="340100"/>
    <lineage>
        <taxon>Bacteria</taxon>
        <taxon>Pseudomonadati</taxon>
        <taxon>Pseudomonadota</taxon>
        <taxon>Betaproteobacteria</taxon>
        <taxon>Burkholderiales</taxon>
        <taxon>Alcaligenaceae</taxon>
        <taxon>Bordetella</taxon>
    </lineage>
</organism>
<name>Y3884_BORPD</name>
<feature type="chain" id="PRO_1000126178" description="UPF0178 protein Bpet3884">
    <location>
        <begin position="1"/>
        <end position="150"/>
    </location>
</feature>
<protein>
    <recommendedName>
        <fullName evidence="1">UPF0178 protein Bpet3884</fullName>
    </recommendedName>
</protein>
<evidence type="ECO:0000255" key="1">
    <source>
        <dbReference type="HAMAP-Rule" id="MF_00489"/>
    </source>
</evidence>